<organismHost>
    <name type="scientific">Chlorella</name>
    <dbReference type="NCBI Taxonomy" id="3071"/>
</organismHost>
<dbReference type="EMBL" id="M85052">
    <property type="protein sequence ID" value="AAA88828.1"/>
    <property type="molecule type" value="Genomic_DNA"/>
</dbReference>
<dbReference type="EMBL" id="JF411744">
    <property type="protein sequence ID" value="AAC96798.1"/>
    <property type="molecule type" value="Genomic_DNA"/>
</dbReference>
<dbReference type="PIR" id="A40245">
    <property type="entry name" value="VCXECV"/>
</dbReference>
<dbReference type="RefSeq" id="NP_048787.1">
    <property type="nucleotide sequence ID" value="NC_000852.5"/>
</dbReference>
<dbReference type="PDB" id="1M4X">
    <property type="method" value="EM"/>
    <property type="resolution" value="28.00 A"/>
    <property type="chains" value="A/B/C=25-437"/>
</dbReference>
<dbReference type="PDB" id="3KK5">
    <property type="method" value="EM"/>
    <property type="chains" value="A/B/C/D/E/F/G/H/I/J/K/L/M=1-437"/>
</dbReference>
<dbReference type="PDB" id="5TIP">
    <property type="method" value="X-ray"/>
    <property type="resolution" value="2.00 A"/>
    <property type="chains" value="A/B/C/D=2-437"/>
</dbReference>
<dbReference type="PDB" id="5TIQ">
    <property type="method" value="X-ray"/>
    <property type="resolution" value="2.54 A"/>
    <property type="chains" value="A/B=2-437"/>
</dbReference>
<dbReference type="PDB" id="6NCL">
    <property type="method" value="EM"/>
    <property type="resolution" value="3.50 A"/>
    <property type="chains" value="d0/d1/d2/d3/d4/d5/d6/d7/d8/d9/e0/e1/e2/e3/e4/e5/e6/e7/e8/e9/f0/f1/f2/f3/f4/f5/f6/f7/f8/f9=1-437"/>
</dbReference>
<dbReference type="PDB" id="8H2I">
    <property type="method" value="EM"/>
    <property type="resolution" value="3.80 A"/>
    <property type="chains" value="aA/aB/aC/aD/aE/aF/aG/aH/aI/aJ/aK/aL/aM/aN/aO/aP/aQ/aR/aS/aT/aU/aV/aW/aX/aY/aZ/aa/ab/ac/ad=1-437"/>
</dbReference>
<dbReference type="PDBsum" id="1M4X"/>
<dbReference type="PDBsum" id="3KK5"/>
<dbReference type="PDBsum" id="5TIP"/>
<dbReference type="PDBsum" id="5TIQ"/>
<dbReference type="PDBsum" id="6NCL"/>
<dbReference type="PDBsum" id="8H2I"/>
<dbReference type="EMDB" id="EMD-0436"/>
<dbReference type="EMDB" id="EMD-34438"/>
<dbReference type="SMR" id="P30328"/>
<dbReference type="GeneID" id="917865"/>
<dbReference type="KEGG" id="vg:917865"/>
<dbReference type="OrthoDB" id="5765at10239"/>
<dbReference type="EvolutionaryTrace" id="P30328"/>
<dbReference type="Proteomes" id="UP000000862">
    <property type="component" value="Genome"/>
</dbReference>
<dbReference type="GO" id="GO:0019028">
    <property type="term" value="C:viral capsid"/>
    <property type="evidence" value="ECO:0007669"/>
    <property type="project" value="UniProtKB-KW"/>
</dbReference>
<dbReference type="GO" id="GO:0008289">
    <property type="term" value="F:lipid binding"/>
    <property type="evidence" value="ECO:0007669"/>
    <property type="project" value="UniProtKB-KW"/>
</dbReference>
<dbReference type="GO" id="GO:0005198">
    <property type="term" value="F:structural molecule activity"/>
    <property type="evidence" value="ECO:0007669"/>
    <property type="project" value="InterPro"/>
</dbReference>
<dbReference type="Gene3D" id="2.70.9.10">
    <property type="entry name" value="Adenovirus Type 2 Hexon, domain 4"/>
    <property type="match status" value="1"/>
</dbReference>
<dbReference type="Gene3D" id="2.70.9.20">
    <property type="entry name" value="Major capsid protein Vp54"/>
    <property type="match status" value="1"/>
</dbReference>
<dbReference type="InterPro" id="IPR031654">
    <property type="entry name" value="Capsid_N"/>
</dbReference>
<dbReference type="InterPro" id="IPR007542">
    <property type="entry name" value="MCP_C"/>
</dbReference>
<dbReference type="InterPro" id="IPR038519">
    <property type="entry name" value="MCP_C_sf"/>
</dbReference>
<dbReference type="InterPro" id="IPR016112">
    <property type="entry name" value="VP_dsDNA_II"/>
</dbReference>
<dbReference type="Pfam" id="PF16903">
    <property type="entry name" value="Capsid_N"/>
    <property type="match status" value="1"/>
</dbReference>
<dbReference type="Pfam" id="PF04451">
    <property type="entry name" value="Capsid_NCLDV"/>
    <property type="match status" value="1"/>
</dbReference>
<dbReference type="SUPFAM" id="SSF49749">
    <property type="entry name" value="Group II dsDNA viruses VP"/>
    <property type="match status" value="2"/>
</dbReference>
<reference key="1">
    <citation type="journal article" date="1992" name="Virology">
        <title>Characterization of the major capsid protein and cloning of its gene from algal virus PBCV-1.</title>
        <authorList>
            <person name="Graves M.V."/>
            <person name="Meints R.H."/>
        </authorList>
    </citation>
    <scope>NUCLEOTIDE SEQUENCE [GENOMIC DNA]</scope>
    <scope>PARTIAL PROTEIN SEQUENCE</scope>
</reference>
<reference key="2">
    <citation type="journal article" date="1996" name="Virology">
        <title>Analysis of 76 kb of the chlorella virus PBCV-1 330-kb genome: map positions 182 to 258.</title>
        <authorList>
            <person name="Kutish G.F."/>
            <person name="Li Y."/>
            <person name="Lu Z."/>
            <person name="Furuta M."/>
            <person name="Rock D.L."/>
            <person name="van Etten J.L."/>
        </authorList>
    </citation>
    <scope>NUCLEOTIDE SEQUENCE [LARGE SCALE GENOMIC DNA]</scope>
</reference>
<reference key="3">
    <citation type="journal article" date="1997" name="Virology">
        <title>Proteolytic processing of Chlorella virus CVK2 capsid proteins.</title>
        <authorList>
            <person name="Songsri P."/>
            <person name="Hiramatsu S."/>
            <person name="Fujie M."/>
            <person name="Yamada T."/>
        </authorList>
    </citation>
    <scope>SUBCELLULAR LOCATION</scope>
    <scope>IDENTIFICATION</scope>
    <source>
        <strain>K2</strain>
    </source>
</reference>
<reference key="4">
    <citation type="journal article" date="1994" name="Virology">
        <title>Protein glycosylation and myristylation in Chlorella virus PBCV-1 and its antigenic variants.</title>
        <authorList>
            <person name="Que Q."/>
            <person name="Li Y."/>
            <person name="Wang I.N."/>
            <person name="Lane L.C."/>
            <person name="Chaney W.G."/>
            <person name="Van Etten J.L."/>
        </authorList>
    </citation>
    <scope>MYRISTOYLATION</scope>
    <scope>GLYCOSYLATION</scope>
</reference>
<reference key="5">
    <citation type="journal article" date="2010" name="J. Virol.">
        <title>Microarray analysis of Paramecium bursaria chlorella virus 1 transcription.</title>
        <authorList>
            <person name="Yanai-Balser G.M."/>
            <person name="Duncan G.A."/>
            <person name="Eudy J.D."/>
            <person name="Wang D."/>
            <person name="Li X."/>
            <person name="Agarkova I.V."/>
            <person name="Dunigan D.D."/>
            <person name="Van Etten J.L."/>
        </authorList>
    </citation>
    <scope>INDUCTION</scope>
</reference>
<reference evidence="10" key="6">
    <citation type="journal article" date="2002" name="Proc. Natl. Acad. Sci. U.S.A.">
        <title>The structure and evolution of the major capsid protein of a large, lipid-containing DNA virus.</title>
        <authorList>
            <person name="Nandhagopal N."/>
            <person name="Simpson A.A."/>
            <person name="Gurnon J.R."/>
            <person name="Yan X."/>
            <person name="Baker T.S."/>
            <person name="Graves M.V."/>
            <person name="Van Etten J.L."/>
            <person name="Rossmann M.G."/>
        </authorList>
    </citation>
    <scope>STRUCTURE BY ELECTRON MICROSCOPY (28.00 ANGSTROMS) OF 25-437</scope>
    <scope>FUNCTION</scope>
    <scope>GLYCOSYLATION AT ASN-280; ASN-302; ASN-399 AND ASN-406</scope>
</reference>
<reference evidence="11 12" key="7">
    <citation type="journal article" date="2018" name="Proc. Natl. Acad. Sci. U.S.A.">
        <title>Structure of the chlorovirus PBCV-1 major capsid glycoprotein determined by combining crystallographic and carbohydrate molecular modeling approaches.</title>
        <authorList>
            <person name="De Castro C."/>
            <person name="Klose T."/>
            <person name="Speciale I."/>
            <person name="Lanzetta R."/>
            <person name="Molinaro A."/>
            <person name="Van Etten J.L."/>
            <person name="Rossmann M.G."/>
        </authorList>
    </citation>
    <scope>X-RAY CRYSTALLOGRAPHY (2.00 ANGSTROMS) OF 2-437</scope>
    <scope>GLYCOSYLATION AT ASN-280; ASN-302; ASN-399 AND ASN-406</scope>
    <scope>FUNCTION</scope>
</reference>
<reference evidence="13" key="8">
    <citation type="journal article" date="2019" name="Nat. Commun.">
        <title>Near-atomic structure of a giant virus.</title>
        <authorList>
            <person name="Fang Q."/>
            <person name="Zhu D."/>
            <person name="Agarkova I."/>
            <person name="Adhikari J."/>
            <person name="Klose T."/>
            <person name="Liu Y."/>
            <person name="Chen Z."/>
            <person name="Sun Y."/>
            <person name="Gross M.L."/>
            <person name="Van Etten J.L."/>
            <person name="Zhang X."/>
            <person name="Rossmann M.G."/>
        </authorList>
    </citation>
    <scope>STRUCTURE BY ELECTRON MICROSCOPY (3.50 ANGSTROMS)</scope>
    <scope>FUNCTION</scope>
    <scope>SUBCELLULAR LOCATION</scope>
</reference>
<reference evidence="14" key="9">
    <citation type="journal article" date="2022" name="Nat. Commun.">
        <title>Near-atomic, non-icosahedrally averaged structure of giant virus Paramecium bursaria chlorella virus 1.</title>
        <authorList>
            <person name="Shao Q."/>
            <person name="Agarkova I.V."/>
            <person name="Noel E.A."/>
            <person name="Dunigan D.D."/>
            <person name="Liu Y."/>
            <person name="Wang A."/>
            <person name="Guo M."/>
            <person name="Xie L."/>
            <person name="Zhao X."/>
            <person name="Rossmann M.G."/>
            <person name="Van Etten J.L."/>
            <person name="Klose T."/>
            <person name="Fang Q."/>
        </authorList>
    </citation>
    <scope>STRUCTURE BY ELECTRON MICROSCOPY (3.80 ANGSTROMS)</scope>
    <scope>FUNCTION</scope>
</reference>
<comment type="function">
    <text evidence="1 3 4 5">Major capsid protein self-assembles to form an icosahedral capsid with a pseudo T=169 symmetry, about 190 nm in diameter, and consisting of 1680 major capsid proteins trimers (PubMed:12411581, PubMed:29255015, PubMed:30674888, PubMed:36309542). The capsid consists in 5040 copies of the major capsid protein (hexamers), 60 copies of the penton protein (pentamers) and 1800 minor capsid proteins of different types (PubMed:12411581, PubMed:30674888, PubMed:36309542). The minor capsid proteins form a hexagonal network below the outer capsid shell, stabilizing the capsid by binding neighboring capsomers together (PubMed:30674888, PubMed:36309542).</text>
</comment>
<comment type="subcellular location">
    <subcellularLocation>
        <location evidence="4 7">Virion</location>
    </subcellularLocation>
    <text evidence="8">Composes about 40% of virion proteins.</text>
</comment>
<comment type="induction">
    <text evidence="2">Expressed in the late phase of the viral replicative cycle.</text>
</comment>
<comment type="PTM">
    <text evidence="6">Myristoylated at the C-terminus.</text>
</comment>
<comment type="PTM">
    <text evidence="1 3 6">Glycosylated; highly branched oligosaccharides (PubMed:29255015, PubMed:8053156). The pattern of glycosylation sites are unusual (PubMed:12411581, PubMed:8053156).</text>
</comment>
<comment type="miscellaneous">
    <text evidence="5">The viral capsid possesses up to five major capsid protein variants (PubMed:36309542). They behave as asymmetric capsid components (PubMed:36309542).</text>
</comment>
<comment type="similarity">
    <text evidence="9">Belongs to the NCLDV major capsid protein family.</text>
</comment>
<protein>
    <recommendedName>
        <fullName>Major capsid protein</fullName>
        <shortName>MCP</shortName>
    </recommendedName>
    <alternativeName>
        <fullName>Vp54</fullName>
    </alternativeName>
</protein>
<feature type="initiator methionine" description="Removed; by host">
    <location>
        <position position="1"/>
    </location>
</feature>
<feature type="chain" id="PRO_0000222990" description="Major capsid protein">
    <location>
        <begin position="2"/>
        <end position="437"/>
    </location>
</feature>
<feature type="glycosylation site" description="N-linked (Glc...) asparagine; by host" evidence="1 3">
    <location>
        <position position="280"/>
    </location>
</feature>
<feature type="glycosylation site" description="N-linked (Glc...) asparagine; by host" evidence="1 3">
    <location>
        <position position="302"/>
    </location>
</feature>
<feature type="glycosylation site" description="N-linked (Glc...) asparagine; by host" evidence="1 3">
    <location>
        <position position="399"/>
    </location>
</feature>
<feature type="glycosylation site" description="N-linked (Glc...) asparagine; by host" evidence="1 3">
    <location>
        <position position="406"/>
    </location>
</feature>
<feature type="helix" evidence="15">
    <location>
        <begin position="4"/>
        <end position="9"/>
    </location>
</feature>
<feature type="helix" evidence="15">
    <location>
        <begin position="13"/>
        <end position="15"/>
    </location>
</feature>
<feature type="helix" evidence="15">
    <location>
        <begin position="16"/>
        <end position="19"/>
    </location>
</feature>
<feature type="strand" evidence="15">
    <location>
        <begin position="37"/>
        <end position="43"/>
    </location>
</feature>
<feature type="strand" evidence="15">
    <location>
        <begin position="55"/>
        <end position="59"/>
    </location>
</feature>
<feature type="strand" evidence="15">
    <location>
        <begin position="64"/>
        <end position="77"/>
    </location>
</feature>
<feature type="helix" evidence="15">
    <location>
        <begin position="88"/>
        <end position="92"/>
    </location>
</feature>
<feature type="strand" evidence="15">
    <location>
        <begin position="93"/>
        <end position="100"/>
    </location>
</feature>
<feature type="strand" evidence="15">
    <location>
        <begin position="103"/>
        <end position="109"/>
    </location>
</feature>
<feature type="helix" evidence="15">
    <location>
        <begin position="110"/>
        <end position="120"/>
    </location>
</feature>
<feature type="helix" evidence="15">
    <location>
        <begin position="123"/>
        <end position="133"/>
    </location>
</feature>
<feature type="strand" evidence="15">
    <location>
        <begin position="144"/>
        <end position="150"/>
    </location>
</feature>
<feature type="helix" evidence="15">
    <location>
        <begin position="154"/>
        <end position="157"/>
    </location>
</feature>
<feature type="helix" evidence="15">
    <location>
        <begin position="159"/>
        <end position="161"/>
    </location>
</feature>
<feature type="helix" evidence="15">
    <location>
        <begin position="165"/>
        <end position="167"/>
    </location>
</feature>
<feature type="strand" evidence="15">
    <location>
        <begin position="173"/>
        <end position="179"/>
    </location>
</feature>
<feature type="turn" evidence="15">
    <location>
        <begin position="184"/>
        <end position="186"/>
    </location>
</feature>
<feature type="strand" evidence="15">
    <location>
        <begin position="187"/>
        <end position="189"/>
    </location>
</feature>
<feature type="strand" evidence="15">
    <location>
        <begin position="201"/>
        <end position="211"/>
    </location>
</feature>
<feature type="helix" evidence="15">
    <location>
        <begin position="213"/>
        <end position="221"/>
    </location>
</feature>
<feature type="strand" evidence="15">
    <location>
        <begin position="224"/>
        <end position="232"/>
    </location>
</feature>
<feature type="strand" evidence="15">
    <location>
        <begin position="243"/>
        <end position="245"/>
    </location>
</feature>
<feature type="strand" evidence="15">
    <location>
        <begin position="248"/>
        <end position="252"/>
    </location>
</feature>
<feature type="strand" evidence="15">
    <location>
        <begin position="257"/>
        <end position="267"/>
    </location>
</feature>
<feature type="strand" evidence="15">
    <location>
        <begin position="284"/>
        <end position="286"/>
    </location>
</feature>
<feature type="turn" evidence="15">
    <location>
        <begin position="287"/>
        <end position="289"/>
    </location>
</feature>
<feature type="helix" evidence="15">
    <location>
        <begin position="300"/>
        <end position="302"/>
    </location>
</feature>
<feature type="helix" evidence="15">
    <location>
        <begin position="308"/>
        <end position="310"/>
    </location>
</feature>
<feature type="strand" evidence="15">
    <location>
        <begin position="313"/>
        <end position="320"/>
    </location>
</feature>
<feature type="strand" evidence="15">
    <location>
        <begin position="323"/>
        <end position="326"/>
    </location>
</feature>
<feature type="helix" evidence="15">
    <location>
        <begin position="331"/>
        <end position="342"/>
    </location>
</feature>
<feature type="strand" evidence="15">
    <location>
        <begin position="351"/>
        <end position="358"/>
    </location>
</feature>
<feature type="strand" evidence="15">
    <location>
        <begin position="362"/>
        <end position="364"/>
    </location>
</feature>
<feature type="helix" evidence="15">
    <location>
        <begin position="371"/>
        <end position="373"/>
    </location>
</feature>
<feature type="strand" evidence="15">
    <location>
        <begin position="377"/>
        <end position="383"/>
    </location>
</feature>
<feature type="strand" evidence="15">
    <location>
        <begin position="385"/>
        <end position="388"/>
    </location>
</feature>
<feature type="helix" evidence="15">
    <location>
        <begin position="393"/>
        <end position="396"/>
    </location>
</feature>
<feature type="strand" evidence="15">
    <location>
        <begin position="403"/>
        <end position="405"/>
    </location>
</feature>
<feature type="helix" evidence="15">
    <location>
        <begin position="406"/>
        <end position="410"/>
    </location>
</feature>
<feature type="strand" evidence="15">
    <location>
        <begin position="413"/>
        <end position="427"/>
    </location>
</feature>
<feature type="strand" evidence="15">
    <location>
        <begin position="430"/>
        <end position="434"/>
    </location>
</feature>
<organism>
    <name type="scientific">Paramecium bursaria Chlorella virus 1</name>
    <name type="common">PBCV-1</name>
    <dbReference type="NCBI Taxonomy" id="10506"/>
    <lineage>
        <taxon>Viruses</taxon>
        <taxon>Varidnaviria</taxon>
        <taxon>Bamfordvirae</taxon>
        <taxon>Nucleocytoviricota</taxon>
        <taxon>Megaviricetes</taxon>
        <taxon>Algavirales</taxon>
        <taxon>Phycodnaviridae</taxon>
        <taxon>Chlorovirus</taxon>
    </lineage>
</organism>
<name>MCP_PBCV1</name>
<evidence type="ECO:0000269" key="1">
    <source>
    </source>
</evidence>
<evidence type="ECO:0000269" key="2">
    <source>
    </source>
</evidence>
<evidence type="ECO:0000269" key="3">
    <source>
    </source>
</evidence>
<evidence type="ECO:0000269" key="4">
    <source>
    </source>
</evidence>
<evidence type="ECO:0000269" key="5">
    <source>
    </source>
</evidence>
<evidence type="ECO:0000269" key="6">
    <source>
    </source>
</evidence>
<evidence type="ECO:0000269" key="7">
    <source>
    </source>
</evidence>
<evidence type="ECO:0000303" key="8">
    <source>
    </source>
</evidence>
<evidence type="ECO:0000305" key="9"/>
<evidence type="ECO:0007744" key="10">
    <source>
        <dbReference type="PDB" id="1M4X"/>
    </source>
</evidence>
<evidence type="ECO:0007744" key="11">
    <source>
        <dbReference type="PDB" id="5TIP"/>
    </source>
</evidence>
<evidence type="ECO:0007744" key="12">
    <source>
        <dbReference type="PDB" id="5TIQ"/>
    </source>
</evidence>
<evidence type="ECO:0007744" key="13">
    <source>
        <dbReference type="PDB" id="6NCL"/>
    </source>
</evidence>
<evidence type="ECO:0007744" key="14">
    <source>
        <dbReference type="PDB" id="8H2I"/>
    </source>
</evidence>
<evidence type="ECO:0007829" key="15">
    <source>
        <dbReference type="PDB" id="5TIP"/>
    </source>
</evidence>
<gene>
    <name type="ordered locus">A430L</name>
</gene>
<proteinExistence type="evidence at protein level"/>
<sequence>MAGGLSQLVAYGAQDVYLTGNPQITFFKTVYRRYTNFAIESIQQTINGSVGFGNKVSTQISRNGDLITDIVVEFVLTKGGNGGTTYYPAEELLQDVELEIGGQRIDKHYNDWFRTYDALFRMNDDRYNYRRMTDWVNNELVGAQKRFYVPLIFFFNQTPGLALPLIALQYHEVKLYFTLASQVQGVNYNGSSAIAGAAQPTMSVWVDYIFLDTQERTRFAQLPHEYLIEQLQFTGSETATPSATTQASQNIRLNFNHPTKYLAWNFNNPTNYGQYTALANIPGACSGAGTAAATVTTPDYGNTGTYNEQLAVLDSAKIQLNGQDRFATRKGSYFNKVQPYQSIGGVTPAGVYLYSFALKPAGRQPSGTCNFSRIDNATLSLTYKTCSIDATSPAAVLGNTETVTANTATLLTALNIYAKNYNVLRIMSGMGGLAYAN</sequence>
<accession>P30328</accession>
<keyword id="KW-0002">3D-structure</keyword>
<keyword id="KW-0167">Capsid protein</keyword>
<keyword id="KW-0903">Direct protein sequencing</keyword>
<keyword id="KW-0325">Glycoprotein</keyword>
<keyword id="KW-0426">Late protein</keyword>
<keyword id="KW-0446">Lipid-binding</keyword>
<keyword id="KW-1185">Reference proteome</keyword>
<keyword id="KW-0946">Virion</keyword>